<sequence>MARLAGVAALSLVLVLLGAGVPRPAAAAAAKTQVFLSKLPKALVVGVSPKHGEVVHAGENTVTVTWSLNTSEPAGADAAFKSVKVKLCYAPASRTDRGWRKASDDLHKDKACQFKVTVQPYAAGAGRFDYVVARDIPTASYFVRAYAVDASGTEVAYGQSSPDAAFDVAGITGIHASLKVAAGVFSTFSIAALAFFFVVEKRKKDK</sequence>
<accession>Q6ZI50</accession>
<accession>A0A0P0VL90</accession>
<organism>
    <name type="scientific">Oryza sativa subsp. japonica</name>
    <name type="common">Rice</name>
    <dbReference type="NCBI Taxonomy" id="39947"/>
    <lineage>
        <taxon>Eukaryota</taxon>
        <taxon>Viridiplantae</taxon>
        <taxon>Streptophyta</taxon>
        <taxon>Embryophyta</taxon>
        <taxon>Tracheophyta</taxon>
        <taxon>Spermatophyta</taxon>
        <taxon>Magnoliopsida</taxon>
        <taxon>Liliopsida</taxon>
        <taxon>Poales</taxon>
        <taxon>Poaceae</taxon>
        <taxon>BOP clade</taxon>
        <taxon>Oryzoideae</taxon>
        <taxon>Oryzeae</taxon>
        <taxon>Oryzinae</taxon>
        <taxon>Oryza</taxon>
        <taxon>Oryza sativa</taxon>
    </lineage>
</organism>
<dbReference type="EMBL" id="AP004023">
    <property type="protein sequence ID" value="BAD16835.1"/>
    <property type="molecule type" value="Genomic_DNA"/>
</dbReference>
<dbReference type="EMBL" id="AP008208">
    <property type="protein sequence ID" value="BAF09231.1"/>
    <property type="molecule type" value="Genomic_DNA"/>
</dbReference>
<dbReference type="EMBL" id="AP014958">
    <property type="protein sequence ID" value="BAS79551.1"/>
    <property type="molecule type" value="Genomic_DNA"/>
</dbReference>
<dbReference type="EMBL" id="CM000139">
    <property type="protein sequence ID" value="EAZ23664.1"/>
    <property type="molecule type" value="Genomic_DNA"/>
</dbReference>
<dbReference type="RefSeq" id="XP_015623791.1">
    <property type="nucleotide sequence ID" value="XM_015768305.1"/>
</dbReference>
<dbReference type="FunCoup" id="Q6ZI50">
    <property type="interactions" value="773"/>
</dbReference>
<dbReference type="STRING" id="39947.Q6ZI50"/>
<dbReference type="PaxDb" id="39947-Q6ZI50"/>
<dbReference type="EnsemblPlants" id="Os02t0595900-01">
    <property type="protein sequence ID" value="Os02t0595900-01"/>
    <property type="gene ID" value="Os02g0595900"/>
</dbReference>
<dbReference type="Gramene" id="Os02t0595900-01">
    <property type="protein sequence ID" value="Os02t0595900-01"/>
    <property type="gene ID" value="Os02g0595900"/>
</dbReference>
<dbReference type="KEGG" id="dosa:Os02g0595900"/>
<dbReference type="eggNOG" id="ENOG502RXTZ">
    <property type="taxonomic scope" value="Eukaryota"/>
</dbReference>
<dbReference type="HOGENOM" id="CLU_093989_0_0_1"/>
<dbReference type="InParanoid" id="Q6ZI50"/>
<dbReference type="OrthoDB" id="2015470at2759"/>
<dbReference type="Proteomes" id="UP000000763">
    <property type="component" value="Chromosome 2"/>
</dbReference>
<dbReference type="Proteomes" id="UP000007752">
    <property type="component" value="Chromosome 2"/>
</dbReference>
<dbReference type="Proteomes" id="UP000059680">
    <property type="component" value="Chromosome 2"/>
</dbReference>
<dbReference type="GO" id="GO:0005886">
    <property type="term" value="C:plasma membrane"/>
    <property type="evidence" value="ECO:0007669"/>
    <property type="project" value="UniProtKB-SubCell"/>
</dbReference>
<dbReference type="GO" id="GO:0015112">
    <property type="term" value="F:nitrate transmembrane transporter activity"/>
    <property type="evidence" value="ECO:0000314"/>
    <property type="project" value="UniProtKB"/>
</dbReference>
<dbReference type="GO" id="GO:0042128">
    <property type="term" value="P:nitrate assimilation"/>
    <property type="evidence" value="ECO:0007669"/>
    <property type="project" value="UniProtKB-KW"/>
</dbReference>
<dbReference type="GO" id="GO:0015706">
    <property type="term" value="P:nitrate transmembrane transport"/>
    <property type="evidence" value="ECO:0000314"/>
    <property type="project" value="UniProtKB"/>
</dbReference>
<dbReference type="GO" id="GO:0010167">
    <property type="term" value="P:response to nitrate"/>
    <property type="evidence" value="ECO:0000318"/>
    <property type="project" value="GO_Central"/>
</dbReference>
<dbReference type="InterPro" id="IPR016605">
    <property type="entry name" value="Transptr_NO3_Nar2"/>
</dbReference>
<dbReference type="PANTHER" id="PTHR34806:SF1">
    <property type="entry name" value="HIGH-AFFINITY NITRATE TRANSPORTER 3.1"/>
    <property type="match status" value="1"/>
</dbReference>
<dbReference type="PANTHER" id="PTHR34806">
    <property type="entry name" value="HIGH-AFFINITY NITRATE TRANSPORTER 3.2"/>
    <property type="match status" value="1"/>
</dbReference>
<dbReference type="Pfam" id="PF16974">
    <property type="entry name" value="NAR2"/>
    <property type="match status" value="1"/>
</dbReference>
<dbReference type="PIRSF" id="PIRSF012939">
    <property type="entry name" value="Transpt_NO3_Nar2"/>
    <property type="match status" value="1"/>
</dbReference>
<proteinExistence type="evidence at protein level"/>
<name>NAR21_ORYSJ</name>
<evidence type="ECO:0000250" key="1"/>
<evidence type="ECO:0000255" key="2"/>
<evidence type="ECO:0000269" key="3">
    <source>
    </source>
</evidence>
<evidence type="ECO:0000269" key="4">
    <source>
    </source>
</evidence>
<evidence type="ECO:0000269" key="5">
    <source>
    </source>
</evidence>
<evidence type="ECO:0000305" key="6"/>
<evidence type="ECO:0000305" key="7">
    <source>
    </source>
</evidence>
<reference key="1">
    <citation type="journal article" date="2005" name="Nature">
        <title>The map-based sequence of the rice genome.</title>
        <authorList>
            <consortium name="International rice genome sequencing project (IRGSP)"/>
        </authorList>
    </citation>
    <scope>NUCLEOTIDE SEQUENCE [LARGE SCALE GENOMIC DNA]</scope>
    <source>
        <strain>cv. Nipponbare</strain>
    </source>
</reference>
<reference key="2">
    <citation type="journal article" date="2008" name="Nucleic Acids Res.">
        <title>The rice annotation project database (RAP-DB): 2008 update.</title>
        <authorList>
            <consortium name="The rice annotation project (RAP)"/>
        </authorList>
    </citation>
    <scope>GENOME REANNOTATION</scope>
    <source>
        <strain>cv. Nipponbare</strain>
    </source>
</reference>
<reference key="3">
    <citation type="journal article" date="2013" name="Rice">
        <title>Improvement of the Oryza sativa Nipponbare reference genome using next generation sequence and optical map data.</title>
        <authorList>
            <person name="Kawahara Y."/>
            <person name="de la Bastide M."/>
            <person name="Hamilton J.P."/>
            <person name="Kanamori H."/>
            <person name="McCombie W.R."/>
            <person name="Ouyang S."/>
            <person name="Schwartz D.C."/>
            <person name="Tanaka T."/>
            <person name="Wu J."/>
            <person name="Zhou S."/>
            <person name="Childs K.L."/>
            <person name="Davidson R.M."/>
            <person name="Lin H."/>
            <person name="Quesada-Ocampo L."/>
            <person name="Vaillancourt B."/>
            <person name="Sakai H."/>
            <person name="Lee S.S."/>
            <person name="Kim J."/>
            <person name="Numa H."/>
            <person name="Itoh T."/>
            <person name="Buell C.R."/>
            <person name="Matsumoto T."/>
        </authorList>
    </citation>
    <scope>GENOME REANNOTATION</scope>
    <source>
        <strain>cv. Nipponbare</strain>
    </source>
</reference>
<reference key="4">
    <citation type="journal article" date="2005" name="PLoS Biol.">
        <title>The genomes of Oryza sativa: a history of duplications.</title>
        <authorList>
            <person name="Yu J."/>
            <person name="Wang J."/>
            <person name="Lin W."/>
            <person name="Li S."/>
            <person name="Li H."/>
            <person name="Zhou J."/>
            <person name="Ni P."/>
            <person name="Dong W."/>
            <person name="Hu S."/>
            <person name="Zeng C."/>
            <person name="Zhang J."/>
            <person name="Zhang Y."/>
            <person name="Li R."/>
            <person name="Xu Z."/>
            <person name="Li S."/>
            <person name="Li X."/>
            <person name="Zheng H."/>
            <person name="Cong L."/>
            <person name="Lin L."/>
            <person name="Yin J."/>
            <person name="Geng J."/>
            <person name="Li G."/>
            <person name="Shi J."/>
            <person name="Liu J."/>
            <person name="Lv H."/>
            <person name="Li J."/>
            <person name="Wang J."/>
            <person name="Deng Y."/>
            <person name="Ran L."/>
            <person name="Shi X."/>
            <person name="Wang X."/>
            <person name="Wu Q."/>
            <person name="Li C."/>
            <person name="Ren X."/>
            <person name="Wang J."/>
            <person name="Wang X."/>
            <person name="Li D."/>
            <person name="Liu D."/>
            <person name="Zhang X."/>
            <person name="Ji Z."/>
            <person name="Zhao W."/>
            <person name="Sun Y."/>
            <person name="Zhang Z."/>
            <person name="Bao J."/>
            <person name="Han Y."/>
            <person name="Dong L."/>
            <person name="Ji J."/>
            <person name="Chen P."/>
            <person name="Wu S."/>
            <person name="Liu J."/>
            <person name="Xiao Y."/>
            <person name="Bu D."/>
            <person name="Tan J."/>
            <person name="Yang L."/>
            <person name="Ye C."/>
            <person name="Zhang J."/>
            <person name="Xu J."/>
            <person name="Zhou Y."/>
            <person name="Yu Y."/>
            <person name="Zhang B."/>
            <person name="Zhuang S."/>
            <person name="Wei H."/>
            <person name="Liu B."/>
            <person name="Lei M."/>
            <person name="Yu H."/>
            <person name="Li Y."/>
            <person name="Xu H."/>
            <person name="Wei S."/>
            <person name="He X."/>
            <person name="Fang L."/>
            <person name="Zhang Z."/>
            <person name="Zhang Y."/>
            <person name="Huang X."/>
            <person name="Su Z."/>
            <person name="Tong W."/>
            <person name="Li J."/>
            <person name="Tong Z."/>
            <person name="Li S."/>
            <person name="Ye J."/>
            <person name="Wang L."/>
            <person name="Fang L."/>
            <person name="Lei T."/>
            <person name="Chen C.-S."/>
            <person name="Chen H.-C."/>
            <person name="Xu Z."/>
            <person name="Li H."/>
            <person name="Huang H."/>
            <person name="Zhang F."/>
            <person name="Xu H."/>
            <person name="Li N."/>
            <person name="Zhao C."/>
            <person name="Li S."/>
            <person name="Dong L."/>
            <person name="Huang Y."/>
            <person name="Li L."/>
            <person name="Xi Y."/>
            <person name="Qi Q."/>
            <person name="Li W."/>
            <person name="Zhang B."/>
            <person name="Hu W."/>
            <person name="Zhang Y."/>
            <person name="Tian X."/>
            <person name="Jiao Y."/>
            <person name="Liang X."/>
            <person name="Jin J."/>
            <person name="Gao L."/>
            <person name="Zheng W."/>
            <person name="Hao B."/>
            <person name="Liu S.-M."/>
            <person name="Wang W."/>
            <person name="Yuan L."/>
            <person name="Cao M."/>
            <person name="McDermott J."/>
            <person name="Samudrala R."/>
            <person name="Wang J."/>
            <person name="Wong G.K.-S."/>
            <person name="Yang H."/>
        </authorList>
    </citation>
    <scope>NUCLEOTIDE SEQUENCE [LARGE SCALE GENOMIC DNA]</scope>
    <source>
        <strain>cv. Nipponbare</strain>
    </source>
</reference>
<reference key="5">
    <citation type="journal article" date="2011" name="J. Exp. Bot.">
        <title>Spatial expression and regulation of rice high-affinity nitrate transporters by nitrogen and carbon status.</title>
        <authorList>
            <person name="Feng H."/>
            <person name="Yan M."/>
            <person name="Fan X."/>
            <person name="Li B."/>
            <person name="Shen Q."/>
            <person name="Miller A.J."/>
            <person name="Xu G."/>
        </authorList>
    </citation>
    <scope>FUNCTION</scope>
    <scope>TISSUE SPECIFICITY</scope>
    <scope>INDUCTION</scope>
</reference>
<reference key="6">
    <citation type="journal article" date="2011" name="J. Plant Res.">
        <title>High-affinity nitrate uptake by rice (Oryza sativa) coleoptiles.</title>
        <authorList>
            <person name="Takayanagi S."/>
            <person name="Takagi Y."/>
            <person name="Araki R."/>
            <person name="Hasegawa H."/>
        </authorList>
    </citation>
    <scope>INDUCTION BY NITRATE</scope>
</reference>
<reference key="7">
    <citation type="journal article" date="2011" name="Plant Cell Environ.">
        <title>Rice OsNAR2.1 interacts with OsNRT2.1, OsNRT2.2 and OsNRT2.3a nitrate transporters to provide uptake over high and low concentration ranges.</title>
        <authorList>
            <person name="Yan M."/>
            <person name="Fan X."/>
            <person name="Feng H."/>
            <person name="Miller A.J."/>
            <person name="Shen Q."/>
            <person name="Xu G."/>
        </authorList>
    </citation>
    <scope>FUNCTION</scope>
    <scope>INTERACTION WITH NRT2.1; NRT2.2 AND NRT2.3</scope>
    <scope>INDUCTION</scope>
</reference>
<feature type="signal peptide" evidence="2">
    <location>
        <begin position="1"/>
        <end position="27"/>
    </location>
</feature>
<feature type="chain" id="PRO_0000430008" description="High-affinity nitrate transporter-activating protein 2.1">
    <location>
        <begin position="28"/>
        <end position="206"/>
    </location>
</feature>
<feature type="transmembrane region" description="Helical" evidence="2">
    <location>
        <begin position="180"/>
        <end position="200"/>
    </location>
</feature>
<gene>
    <name type="primary">NAR2.1</name>
    <name type="ordered locus">Os02g0595900</name>
    <name type="ordered locus">LOC_Os02g38230</name>
    <name type="ORF">OJ1126_D09.33</name>
    <name type="ORF">OsJ_07366</name>
</gene>
<keyword id="KW-1003">Cell membrane</keyword>
<keyword id="KW-0472">Membrane</keyword>
<keyword id="KW-0534">Nitrate assimilation</keyword>
<keyword id="KW-1185">Reference proteome</keyword>
<keyword id="KW-0732">Signal</keyword>
<keyword id="KW-0812">Transmembrane</keyword>
<keyword id="KW-1133">Transmembrane helix</keyword>
<protein>
    <recommendedName>
        <fullName>High-affinity nitrate transporter-activating protein 2.1</fullName>
        <shortName>OsNAR2.1</shortName>
    </recommendedName>
</protein>
<comment type="function">
    <text evidence="4 5">Acts as a dual component transporter with NTR2.1, NRT2.2 and NRT2.3. Required for high-affinity nitrate transport. Involved in the regulation of NRT2.1, NRT2.2 and NRT2.3 expression, and in both, HATS (high-affinity transport system) and LATS (low-affinity transport system) activities in plant roots. Imports nitrate with high affinity when expressed with NTR2.1, NTR2.2 or NTR2.3 in a heterologous system (Xenopus oocytes).</text>
</comment>
<comment type="subunit">
    <text evidence="1 5">Heterotetramer composed of two NRT2.1, NRT2.2 or NRT2.3 and two NAR2.1 (By similarity). Interacts with NRT2.1, NRT2.2 and isoform 1 of NRT2.3.</text>
</comment>
<comment type="subcellular location">
    <subcellularLocation>
        <location evidence="6">Cell membrane</location>
        <topology evidence="6">Single-pass membrane protein</topology>
    </subcellularLocation>
</comment>
<comment type="tissue specificity">
    <text evidence="4">Expressed in epidermal cells of primary and lateral roots, root-shoot junction zone, vascular tissues of adventitious root primordia, stems and coleoptiles of germinating seeds.</text>
</comment>
<comment type="induction">
    <text evidence="3 4 5">Circadian-regulation with a peak in the middle of the morning. Induced by nitrate and sucrose in roots. Down-regulated by asparagine and aspartate in roots.</text>
</comment>
<comment type="miscellaneous">
    <text evidence="7">Plants silencing NAR2.1 have decreased nitrate uptake in roots under both high and low nitrate conditions.</text>
</comment>
<comment type="similarity">
    <text evidence="6">Belongs to the NAR2 family.</text>
</comment>